<dbReference type="EC" id="5.2.1.8" evidence="1"/>
<dbReference type="EMBL" id="CP000038">
    <property type="protein sequence ID" value="AAZ86856.1"/>
    <property type="molecule type" value="Genomic_DNA"/>
</dbReference>
<dbReference type="RefSeq" id="WP_000800457.1">
    <property type="nucleotide sequence ID" value="NC_007384.1"/>
</dbReference>
<dbReference type="SMR" id="Q3Z5V6"/>
<dbReference type="GeneID" id="93777382"/>
<dbReference type="KEGG" id="ssn:SSON_0061"/>
<dbReference type="HOGENOM" id="CLU_034646_11_0_6"/>
<dbReference type="Proteomes" id="UP000002529">
    <property type="component" value="Chromosome"/>
</dbReference>
<dbReference type="GO" id="GO:0030288">
    <property type="term" value="C:outer membrane-bounded periplasmic space"/>
    <property type="evidence" value="ECO:0007669"/>
    <property type="project" value="InterPro"/>
</dbReference>
<dbReference type="GO" id="GO:0042277">
    <property type="term" value="F:peptide binding"/>
    <property type="evidence" value="ECO:0007669"/>
    <property type="project" value="InterPro"/>
</dbReference>
<dbReference type="GO" id="GO:0003755">
    <property type="term" value="F:peptidyl-prolyl cis-trans isomerase activity"/>
    <property type="evidence" value="ECO:0007669"/>
    <property type="project" value="UniProtKB-UniRule"/>
</dbReference>
<dbReference type="GO" id="GO:0051082">
    <property type="term" value="F:unfolded protein binding"/>
    <property type="evidence" value="ECO:0007669"/>
    <property type="project" value="UniProtKB-UniRule"/>
</dbReference>
<dbReference type="GO" id="GO:0043165">
    <property type="term" value="P:Gram-negative-bacterium-type cell outer membrane assembly"/>
    <property type="evidence" value="ECO:0007669"/>
    <property type="project" value="InterPro"/>
</dbReference>
<dbReference type="GO" id="GO:0006457">
    <property type="term" value="P:protein folding"/>
    <property type="evidence" value="ECO:0007669"/>
    <property type="project" value="UniProtKB-UniRule"/>
</dbReference>
<dbReference type="GO" id="GO:0050821">
    <property type="term" value="P:protein stabilization"/>
    <property type="evidence" value="ECO:0007669"/>
    <property type="project" value="InterPro"/>
</dbReference>
<dbReference type="FunFam" id="1.10.4030.10:FF:000002">
    <property type="entry name" value="Chaperone SurA"/>
    <property type="match status" value="1"/>
</dbReference>
<dbReference type="FunFam" id="3.10.50.40:FF:000007">
    <property type="entry name" value="Chaperone SurA"/>
    <property type="match status" value="1"/>
</dbReference>
<dbReference type="Gene3D" id="3.10.50.40">
    <property type="match status" value="2"/>
</dbReference>
<dbReference type="Gene3D" id="1.10.4030.10">
    <property type="entry name" value="Porin chaperone SurA, peptide-binding domain"/>
    <property type="match status" value="2"/>
</dbReference>
<dbReference type="HAMAP" id="MF_01183">
    <property type="entry name" value="Chaperone_SurA"/>
    <property type="match status" value="1"/>
</dbReference>
<dbReference type="InterPro" id="IPR050280">
    <property type="entry name" value="OMP_Chaperone_SurA"/>
</dbReference>
<dbReference type="InterPro" id="IPR046357">
    <property type="entry name" value="PPIase_dom_sf"/>
</dbReference>
<dbReference type="InterPro" id="IPR000297">
    <property type="entry name" value="PPIase_PpiC"/>
</dbReference>
<dbReference type="InterPro" id="IPR023058">
    <property type="entry name" value="PPIase_PpiC_CS"/>
</dbReference>
<dbReference type="InterPro" id="IPR023034">
    <property type="entry name" value="PPIase_SurA"/>
</dbReference>
<dbReference type="InterPro" id="IPR015391">
    <property type="entry name" value="SurA_N"/>
</dbReference>
<dbReference type="InterPro" id="IPR027304">
    <property type="entry name" value="Trigger_fact/SurA_dom_sf"/>
</dbReference>
<dbReference type="NCBIfam" id="NF008038">
    <property type="entry name" value="PRK10770.1"/>
    <property type="match status" value="1"/>
</dbReference>
<dbReference type="PANTHER" id="PTHR47637">
    <property type="entry name" value="CHAPERONE SURA"/>
    <property type="match status" value="1"/>
</dbReference>
<dbReference type="PANTHER" id="PTHR47637:SF1">
    <property type="entry name" value="CHAPERONE SURA"/>
    <property type="match status" value="1"/>
</dbReference>
<dbReference type="Pfam" id="PF00639">
    <property type="entry name" value="Rotamase"/>
    <property type="match status" value="1"/>
</dbReference>
<dbReference type="Pfam" id="PF13616">
    <property type="entry name" value="Rotamase_3"/>
    <property type="match status" value="1"/>
</dbReference>
<dbReference type="Pfam" id="PF09312">
    <property type="entry name" value="SurA_N"/>
    <property type="match status" value="1"/>
</dbReference>
<dbReference type="SUPFAM" id="SSF54534">
    <property type="entry name" value="FKBP-like"/>
    <property type="match status" value="2"/>
</dbReference>
<dbReference type="SUPFAM" id="SSF109998">
    <property type="entry name" value="Triger factor/SurA peptide-binding domain-like"/>
    <property type="match status" value="1"/>
</dbReference>
<dbReference type="PROSITE" id="PS01096">
    <property type="entry name" value="PPIC_PPIASE_1"/>
    <property type="match status" value="2"/>
</dbReference>
<dbReference type="PROSITE" id="PS50198">
    <property type="entry name" value="PPIC_PPIASE_2"/>
    <property type="match status" value="2"/>
</dbReference>
<comment type="function">
    <text evidence="1">Chaperone involved in the correct folding and assembly of outer membrane proteins. Recognizes specific patterns of aromatic residues and the orientation of their side chains, which are found more frequently in integral outer membrane proteins. May act in both early periplasmic and late outer membrane-associated steps of protein maturation.</text>
</comment>
<comment type="catalytic activity">
    <reaction evidence="1">
        <text>[protein]-peptidylproline (omega=180) = [protein]-peptidylproline (omega=0)</text>
        <dbReference type="Rhea" id="RHEA:16237"/>
        <dbReference type="Rhea" id="RHEA-COMP:10747"/>
        <dbReference type="Rhea" id="RHEA-COMP:10748"/>
        <dbReference type="ChEBI" id="CHEBI:83833"/>
        <dbReference type="ChEBI" id="CHEBI:83834"/>
        <dbReference type="EC" id="5.2.1.8"/>
    </reaction>
</comment>
<comment type="subcellular location">
    <subcellularLocation>
        <location evidence="1">Periplasm</location>
    </subcellularLocation>
    <text evidence="1">Is capable of associating with the outer membrane.</text>
</comment>
<comment type="domain">
    <text evidence="1">The PPIase activity resides only in the second parvulin domain. The N-terminal region and the C-terminal tail are necessary and sufficient for the chaperone activity of SurA. The PPIase activity is dispensable for SurA to function as a chaperone. The N-terminal region and the C-terminal tail are also required for porin recognition.</text>
</comment>
<proteinExistence type="inferred from homology"/>
<evidence type="ECO:0000255" key="1">
    <source>
        <dbReference type="HAMAP-Rule" id="MF_01183"/>
    </source>
</evidence>
<keyword id="KW-0143">Chaperone</keyword>
<keyword id="KW-0413">Isomerase</keyword>
<keyword id="KW-0574">Periplasm</keyword>
<keyword id="KW-1185">Reference proteome</keyword>
<keyword id="KW-0677">Repeat</keyword>
<keyword id="KW-0697">Rotamase</keyword>
<keyword id="KW-0732">Signal</keyword>
<reference key="1">
    <citation type="journal article" date="2005" name="Nucleic Acids Res.">
        <title>Genome dynamics and diversity of Shigella species, the etiologic agents of bacillary dysentery.</title>
        <authorList>
            <person name="Yang F."/>
            <person name="Yang J."/>
            <person name="Zhang X."/>
            <person name="Chen L."/>
            <person name="Jiang Y."/>
            <person name="Yan Y."/>
            <person name="Tang X."/>
            <person name="Wang J."/>
            <person name="Xiong Z."/>
            <person name="Dong J."/>
            <person name="Xue Y."/>
            <person name="Zhu Y."/>
            <person name="Xu X."/>
            <person name="Sun L."/>
            <person name="Chen S."/>
            <person name="Nie H."/>
            <person name="Peng J."/>
            <person name="Xu J."/>
            <person name="Wang Y."/>
            <person name="Yuan Z."/>
            <person name="Wen Y."/>
            <person name="Yao Z."/>
            <person name="Shen Y."/>
            <person name="Qiang B."/>
            <person name="Hou Y."/>
            <person name="Yu J."/>
            <person name="Jin Q."/>
        </authorList>
    </citation>
    <scope>NUCLEOTIDE SEQUENCE [LARGE SCALE GENOMIC DNA]</scope>
    <source>
        <strain>Ss046</strain>
    </source>
</reference>
<feature type="signal peptide" evidence="1">
    <location>
        <begin position="1"/>
        <end position="20"/>
    </location>
</feature>
<feature type="chain" id="PRO_0000270041" description="Chaperone SurA">
    <location>
        <begin position="21"/>
        <end position="428"/>
    </location>
</feature>
<feature type="domain" description="PpiC 1" evidence="1">
    <location>
        <begin position="171"/>
        <end position="272"/>
    </location>
</feature>
<feature type="domain" description="PpiC 2" evidence="1">
    <location>
        <begin position="282"/>
        <end position="382"/>
    </location>
</feature>
<sequence>MKNWKTLLLGIAMIANTSFAAPQVVDKVAAVVNNGVVLESDVDGLMQSVKLNAAQARQQLPDDATLRHQIMERLIMDQIILQMGQKMGVKISDEQLDQAIANIAKQNNMTLDQMRSRLAYDGLNYNTYRNQIRKEMIISEVRNNEVRRRITILPQEVESLAQQVGNQNDASTELNLSHILIPLPENPTSDQVNEAESQARAIVDQARNGADFGKLAIAHSADQQALNGGQMGWGRIQELPGIFAQALSTAKKGDIVGPIRSGVGFHILKVNDLRGESKNISVTEVHARHILLKPSPIMTDEQARVKLEQIAADIKSGKTTFAAAAKEFSQDPGSANQGGDLGWATPDIFDPAFRDALTRLNKGQMSAPVHSSFGWHLIELLDTRNVDKTDAAQKDRAYRMLMNRKFSEEAASWMQEQRASAYVKILSN</sequence>
<name>SURA_SHISS</name>
<protein>
    <recommendedName>
        <fullName evidence="1">Chaperone SurA</fullName>
    </recommendedName>
    <alternativeName>
        <fullName evidence="1">Peptidyl-prolyl cis-trans isomerase SurA</fullName>
        <shortName evidence="1">PPIase SurA</shortName>
        <ecNumber evidence="1">5.2.1.8</ecNumber>
    </alternativeName>
    <alternativeName>
        <fullName evidence="1">Rotamase SurA</fullName>
    </alternativeName>
</protein>
<organism>
    <name type="scientific">Shigella sonnei (strain Ss046)</name>
    <dbReference type="NCBI Taxonomy" id="300269"/>
    <lineage>
        <taxon>Bacteria</taxon>
        <taxon>Pseudomonadati</taxon>
        <taxon>Pseudomonadota</taxon>
        <taxon>Gammaproteobacteria</taxon>
        <taxon>Enterobacterales</taxon>
        <taxon>Enterobacteriaceae</taxon>
        <taxon>Shigella</taxon>
    </lineage>
</organism>
<accession>Q3Z5V6</accession>
<gene>
    <name evidence="1" type="primary">surA</name>
    <name type="ordered locus">SSON_0061</name>
</gene>